<comment type="function">
    <text evidence="1">Cell wall formation. Catalyzes the addition of glutamate to the nucleotide precursor UDP-N-acetylmuramoyl-L-alanine (UMA).</text>
</comment>
<comment type="catalytic activity">
    <reaction evidence="1">
        <text>UDP-N-acetyl-alpha-D-muramoyl-L-alanine + D-glutamate + ATP = UDP-N-acetyl-alpha-D-muramoyl-L-alanyl-D-glutamate + ADP + phosphate + H(+)</text>
        <dbReference type="Rhea" id="RHEA:16429"/>
        <dbReference type="ChEBI" id="CHEBI:15378"/>
        <dbReference type="ChEBI" id="CHEBI:29986"/>
        <dbReference type="ChEBI" id="CHEBI:30616"/>
        <dbReference type="ChEBI" id="CHEBI:43474"/>
        <dbReference type="ChEBI" id="CHEBI:83898"/>
        <dbReference type="ChEBI" id="CHEBI:83900"/>
        <dbReference type="ChEBI" id="CHEBI:456216"/>
        <dbReference type="EC" id="6.3.2.9"/>
    </reaction>
</comment>
<comment type="pathway">
    <text evidence="1">Cell wall biogenesis; peptidoglycan biosynthesis.</text>
</comment>
<comment type="subcellular location">
    <subcellularLocation>
        <location evidence="1">Cytoplasm</location>
    </subcellularLocation>
</comment>
<comment type="similarity">
    <text evidence="1">Belongs to the MurCDEF family.</text>
</comment>
<organism>
    <name type="scientific">Shigella sonnei (strain Ss046)</name>
    <dbReference type="NCBI Taxonomy" id="300269"/>
    <lineage>
        <taxon>Bacteria</taxon>
        <taxon>Pseudomonadati</taxon>
        <taxon>Pseudomonadota</taxon>
        <taxon>Gammaproteobacteria</taxon>
        <taxon>Enterobacterales</taxon>
        <taxon>Enterobacteriaceae</taxon>
        <taxon>Shigella</taxon>
    </lineage>
</organism>
<gene>
    <name evidence="1" type="primary">murD</name>
    <name type="ordered locus">SSON_0096</name>
</gene>
<feature type="chain" id="PRO_0000257238" description="UDP-N-acetylmuramoylalanine--D-glutamate ligase">
    <location>
        <begin position="1"/>
        <end position="438"/>
    </location>
</feature>
<feature type="binding site" evidence="1">
    <location>
        <begin position="112"/>
        <end position="118"/>
    </location>
    <ligand>
        <name>ATP</name>
        <dbReference type="ChEBI" id="CHEBI:30616"/>
    </ligand>
</feature>
<reference key="1">
    <citation type="journal article" date="2005" name="Nucleic Acids Res.">
        <title>Genome dynamics and diversity of Shigella species, the etiologic agents of bacillary dysentery.</title>
        <authorList>
            <person name="Yang F."/>
            <person name="Yang J."/>
            <person name="Zhang X."/>
            <person name="Chen L."/>
            <person name="Jiang Y."/>
            <person name="Yan Y."/>
            <person name="Tang X."/>
            <person name="Wang J."/>
            <person name="Xiong Z."/>
            <person name="Dong J."/>
            <person name="Xue Y."/>
            <person name="Zhu Y."/>
            <person name="Xu X."/>
            <person name="Sun L."/>
            <person name="Chen S."/>
            <person name="Nie H."/>
            <person name="Peng J."/>
            <person name="Xu J."/>
            <person name="Wang Y."/>
            <person name="Yuan Z."/>
            <person name="Wen Y."/>
            <person name="Yao Z."/>
            <person name="Shen Y."/>
            <person name="Qiang B."/>
            <person name="Hou Y."/>
            <person name="Yu J."/>
            <person name="Jin Q."/>
        </authorList>
    </citation>
    <scope>NUCLEOTIDE SEQUENCE [LARGE SCALE GENOMIC DNA]</scope>
    <source>
        <strain>Ss046</strain>
    </source>
</reference>
<keyword id="KW-0067">ATP-binding</keyword>
<keyword id="KW-0131">Cell cycle</keyword>
<keyword id="KW-0132">Cell division</keyword>
<keyword id="KW-0133">Cell shape</keyword>
<keyword id="KW-0961">Cell wall biogenesis/degradation</keyword>
<keyword id="KW-0963">Cytoplasm</keyword>
<keyword id="KW-0436">Ligase</keyword>
<keyword id="KW-0547">Nucleotide-binding</keyword>
<keyword id="KW-0573">Peptidoglycan synthesis</keyword>
<keyword id="KW-1185">Reference proteome</keyword>
<evidence type="ECO:0000255" key="1">
    <source>
        <dbReference type="HAMAP-Rule" id="MF_00639"/>
    </source>
</evidence>
<protein>
    <recommendedName>
        <fullName evidence="1">UDP-N-acetylmuramoylalanine--D-glutamate ligase</fullName>
        <ecNumber evidence="1">6.3.2.9</ecNumber>
    </recommendedName>
    <alternativeName>
        <fullName evidence="1">D-glutamic acid-adding enzyme</fullName>
    </alternativeName>
    <alternativeName>
        <fullName evidence="1">UDP-N-acetylmuramoyl-L-alanyl-D-glutamate synthetase</fullName>
    </alternativeName>
</protein>
<sequence length="438" mass="46952">MADYQGKNVVIIGLGLTGLSCVDFFLARGVTPRVMDTRMTPPGLDKLPEAVERHTGSLNDEWLMAADLIVASPGIAQAHPSLSAAADAGIEIVGDIELFCREAQAPIVAITGSNGKSTVTTLVGEMAKAAGVNVGVGGNIGLPALMLLDAECELYVLELSSFQLETTSSLQAVAATILNVTEDHMDRYPFGLQQYRAAKLRIYENAKVCVVNADDALTMPIRGADERCVSFGVNMGDYHLNHQQGETWLRVKGEKVLNVKEMKLSGQHNYTNALAALALADAAGLPRASSLKALTTFTGLPHRFEVVLEHNGVRWINDSKATNVGSTEAALNGLQVDGTLHLLLGGDGKSADFSPLARYLNGDNVRLYCFGRDGAQLAALRPEVAEQTETMEQAMRLLAPRVQLGDMVLLSPACASLDQFKNFEQRGNEFARLAKELG</sequence>
<accession>Q3Z5S1</accession>
<dbReference type="EC" id="6.3.2.9" evidence="1"/>
<dbReference type="EMBL" id="CP000038">
    <property type="protein sequence ID" value="AAZ86891.1"/>
    <property type="molecule type" value="Genomic_DNA"/>
</dbReference>
<dbReference type="RefSeq" id="WP_000796487.1">
    <property type="nucleotide sequence ID" value="NC_007384.1"/>
</dbReference>
<dbReference type="SMR" id="Q3Z5S1"/>
<dbReference type="GeneID" id="93777346"/>
<dbReference type="KEGG" id="ssn:SSON_0096"/>
<dbReference type="HOGENOM" id="CLU_032540_1_0_6"/>
<dbReference type="UniPathway" id="UPA00219"/>
<dbReference type="Proteomes" id="UP000002529">
    <property type="component" value="Chromosome"/>
</dbReference>
<dbReference type="GO" id="GO:0005737">
    <property type="term" value="C:cytoplasm"/>
    <property type="evidence" value="ECO:0007669"/>
    <property type="project" value="UniProtKB-SubCell"/>
</dbReference>
<dbReference type="GO" id="GO:0005524">
    <property type="term" value="F:ATP binding"/>
    <property type="evidence" value="ECO:0007669"/>
    <property type="project" value="UniProtKB-UniRule"/>
</dbReference>
<dbReference type="GO" id="GO:0008764">
    <property type="term" value="F:UDP-N-acetylmuramoylalanine-D-glutamate ligase activity"/>
    <property type="evidence" value="ECO:0007669"/>
    <property type="project" value="UniProtKB-UniRule"/>
</dbReference>
<dbReference type="GO" id="GO:0051301">
    <property type="term" value="P:cell division"/>
    <property type="evidence" value="ECO:0007669"/>
    <property type="project" value="UniProtKB-KW"/>
</dbReference>
<dbReference type="GO" id="GO:0071555">
    <property type="term" value="P:cell wall organization"/>
    <property type="evidence" value="ECO:0007669"/>
    <property type="project" value="UniProtKB-KW"/>
</dbReference>
<dbReference type="GO" id="GO:0009252">
    <property type="term" value="P:peptidoglycan biosynthetic process"/>
    <property type="evidence" value="ECO:0007669"/>
    <property type="project" value="UniProtKB-UniRule"/>
</dbReference>
<dbReference type="GO" id="GO:0008360">
    <property type="term" value="P:regulation of cell shape"/>
    <property type="evidence" value="ECO:0007669"/>
    <property type="project" value="UniProtKB-KW"/>
</dbReference>
<dbReference type="FunFam" id="3.40.1190.10:FF:000002">
    <property type="entry name" value="UDP-N-acetylmuramoylalanine--D-glutamate ligase"/>
    <property type="match status" value="1"/>
</dbReference>
<dbReference type="FunFam" id="3.40.50.720:FF:000126">
    <property type="entry name" value="UDP-N-acetylmuramoylalanine--D-glutamate ligase"/>
    <property type="match status" value="1"/>
</dbReference>
<dbReference type="FunFam" id="3.90.190.20:FF:000003">
    <property type="entry name" value="UDP-N-acetylmuramoylalanine--D-glutamate ligase"/>
    <property type="match status" value="1"/>
</dbReference>
<dbReference type="Gene3D" id="3.90.190.20">
    <property type="entry name" value="Mur ligase, C-terminal domain"/>
    <property type="match status" value="1"/>
</dbReference>
<dbReference type="Gene3D" id="3.40.1190.10">
    <property type="entry name" value="Mur-like, catalytic domain"/>
    <property type="match status" value="1"/>
</dbReference>
<dbReference type="Gene3D" id="3.40.50.720">
    <property type="entry name" value="NAD(P)-binding Rossmann-like Domain"/>
    <property type="match status" value="1"/>
</dbReference>
<dbReference type="HAMAP" id="MF_00639">
    <property type="entry name" value="MurD"/>
    <property type="match status" value="1"/>
</dbReference>
<dbReference type="InterPro" id="IPR036565">
    <property type="entry name" value="Mur-like_cat_sf"/>
</dbReference>
<dbReference type="InterPro" id="IPR004101">
    <property type="entry name" value="Mur_ligase_C"/>
</dbReference>
<dbReference type="InterPro" id="IPR036615">
    <property type="entry name" value="Mur_ligase_C_dom_sf"/>
</dbReference>
<dbReference type="InterPro" id="IPR013221">
    <property type="entry name" value="Mur_ligase_cen"/>
</dbReference>
<dbReference type="InterPro" id="IPR005762">
    <property type="entry name" value="MurD"/>
</dbReference>
<dbReference type="NCBIfam" id="TIGR01087">
    <property type="entry name" value="murD"/>
    <property type="match status" value="1"/>
</dbReference>
<dbReference type="PANTHER" id="PTHR43692">
    <property type="entry name" value="UDP-N-ACETYLMURAMOYLALANINE--D-GLUTAMATE LIGASE"/>
    <property type="match status" value="1"/>
</dbReference>
<dbReference type="PANTHER" id="PTHR43692:SF1">
    <property type="entry name" value="UDP-N-ACETYLMURAMOYLALANINE--D-GLUTAMATE LIGASE"/>
    <property type="match status" value="1"/>
</dbReference>
<dbReference type="Pfam" id="PF02875">
    <property type="entry name" value="Mur_ligase_C"/>
    <property type="match status" value="1"/>
</dbReference>
<dbReference type="Pfam" id="PF08245">
    <property type="entry name" value="Mur_ligase_M"/>
    <property type="match status" value="1"/>
</dbReference>
<dbReference type="Pfam" id="PF21799">
    <property type="entry name" value="MurD-like_N"/>
    <property type="match status" value="1"/>
</dbReference>
<dbReference type="SUPFAM" id="SSF51984">
    <property type="entry name" value="MurCD N-terminal domain"/>
    <property type="match status" value="1"/>
</dbReference>
<dbReference type="SUPFAM" id="SSF53623">
    <property type="entry name" value="MurD-like peptide ligases, catalytic domain"/>
    <property type="match status" value="1"/>
</dbReference>
<dbReference type="SUPFAM" id="SSF53244">
    <property type="entry name" value="MurD-like peptide ligases, peptide-binding domain"/>
    <property type="match status" value="1"/>
</dbReference>
<proteinExistence type="inferred from homology"/>
<name>MURD_SHISS</name>